<accession>Q6HEZ6</accession>
<organism>
    <name type="scientific">Bacillus thuringiensis subsp. konkukian (strain 97-27)</name>
    <dbReference type="NCBI Taxonomy" id="281309"/>
    <lineage>
        <taxon>Bacteria</taxon>
        <taxon>Bacillati</taxon>
        <taxon>Bacillota</taxon>
        <taxon>Bacilli</taxon>
        <taxon>Bacillales</taxon>
        <taxon>Bacillaceae</taxon>
        <taxon>Bacillus</taxon>
        <taxon>Bacillus cereus group</taxon>
    </lineage>
</organism>
<sequence>MKQSMVFSPTLREVPADAEIKSHQLLLRAGFMRQNASGIYSFLPFGLKVLHKVERIVREEMERAGAVELLMPAMQAAELWQESGRWYSYGSELMRMKDRNAREFALGATHEEVITDLVRDEVKSYKKLPLTLYQIQTKFRDEQRPRFGLLRGREFLMKDAYSFHATQESLDEVYDRLYKAYSNIFARCGLNFRAVIADSGAMGGKDTHEFMVLSDVGEDTIAYSDTSDYAANIEMAPVVATYTKSDEAEKELEKVATPDQKAIEEVSAFLNIEADKCIKSMVFKVDEKLVVVLVRGDHEVNDVKVKNVYGASVVELASHEEIKELLNCEVGSLGPIGVNGDIEIIADHAVASIVNGCSGANEEGFHYVNVNPERDFKVSQYTDLRFIQEGDQSPDGNGTILFARGIEVGHVFKLGTRYSEAMNATFLDENGKTQPLIMGCYGIGVSRTVAAIAEQFNDENGLVWPKAVAPFHVHVIPVNMKSDAQREMGENIYNSLQEQGYEVLLDDRAERAGVKFADADLFGLPVRVTVGKKADEGIVEVKVRATGESEEVKVEELQTYIANILK</sequence>
<keyword id="KW-0030">Aminoacyl-tRNA synthetase</keyword>
<keyword id="KW-0067">ATP-binding</keyword>
<keyword id="KW-0963">Cytoplasm</keyword>
<keyword id="KW-0436">Ligase</keyword>
<keyword id="KW-0547">Nucleotide-binding</keyword>
<keyword id="KW-0648">Protein biosynthesis</keyword>
<comment type="function">
    <text evidence="1">Catalyzes the attachment of proline to tRNA(Pro) in a two-step reaction: proline is first activated by ATP to form Pro-AMP and then transferred to the acceptor end of tRNA(Pro). As ProRS can inadvertently accommodate and process non-cognate amino acids such as alanine and cysteine, to avoid such errors it has two additional distinct editing activities against alanine. One activity is designated as 'pretransfer' editing and involves the tRNA(Pro)-independent hydrolysis of activated Ala-AMP. The other activity is designated 'posttransfer' editing and involves deacylation of mischarged Ala-tRNA(Pro). The misacylated Cys-tRNA(Pro) is not edited by ProRS.</text>
</comment>
<comment type="catalytic activity">
    <reaction evidence="1">
        <text>tRNA(Pro) + L-proline + ATP = L-prolyl-tRNA(Pro) + AMP + diphosphate</text>
        <dbReference type="Rhea" id="RHEA:14305"/>
        <dbReference type="Rhea" id="RHEA-COMP:9700"/>
        <dbReference type="Rhea" id="RHEA-COMP:9702"/>
        <dbReference type="ChEBI" id="CHEBI:30616"/>
        <dbReference type="ChEBI" id="CHEBI:33019"/>
        <dbReference type="ChEBI" id="CHEBI:60039"/>
        <dbReference type="ChEBI" id="CHEBI:78442"/>
        <dbReference type="ChEBI" id="CHEBI:78532"/>
        <dbReference type="ChEBI" id="CHEBI:456215"/>
        <dbReference type="EC" id="6.1.1.15"/>
    </reaction>
</comment>
<comment type="subunit">
    <text evidence="1">Homodimer.</text>
</comment>
<comment type="subcellular location">
    <subcellularLocation>
        <location evidence="1">Cytoplasm</location>
    </subcellularLocation>
</comment>
<comment type="domain">
    <text evidence="1">Consists of three domains: the N-terminal catalytic domain, the editing domain and the C-terminal anticodon-binding domain.</text>
</comment>
<comment type="similarity">
    <text evidence="1">Belongs to the class-II aminoacyl-tRNA synthetase family. ProS type 1 subfamily.</text>
</comment>
<reference key="1">
    <citation type="journal article" date="2006" name="J. Bacteriol.">
        <title>Pathogenomic sequence analysis of Bacillus cereus and Bacillus thuringiensis isolates closely related to Bacillus anthracis.</title>
        <authorList>
            <person name="Han C.S."/>
            <person name="Xie G."/>
            <person name="Challacombe J.F."/>
            <person name="Altherr M.R."/>
            <person name="Bhotika S.S."/>
            <person name="Bruce D."/>
            <person name="Campbell C.S."/>
            <person name="Campbell M.L."/>
            <person name="Chen J."/>
            <person name="Chertkov O."/>
            <person name="Cleland C."/>
            <person name="Dimitrijevic M."/>
            <person name="Doggett N.A."/>
            <person name="Fawcett J.J."/>
            <person name="Glavina T."/>
            <person name="Goodwin L.A."/>
            <person name="Hill K.K."/>
            <person name="Hitchcock P."/>
            <person name="Jackson P.J."/>
            <person name="Keim P."/>
            <person name="Kewalramani A.R."/>
            <person name="Longmire J."/>
            <person name="Lucas S."/>
            <person name="Malfatti S."/>
            <person name="McMurry K."/>
            <person name="Meincke L.J."/>
            <person name="Misra M."/>
            <person name="Moseman B.L."/>
            <person name="Mundt M."/>
            <person name="Munk A.C."/>
            <person name="Okinaka R.T."/>
            <person name="Parson-Quintana B."/>
            <person name="Reilly L.P."/>
            <person name="Richardson P."/>
            <person name="Robinson D.L."/>
            <person name="Rubin E."/>
            <person name="Saunders E."/>
            <person name="Tapia R."/>
            <person name="Tesmer J.G."/>
            <person name="Thayer N."/>
            <person name="Thompson L.S."/>
            <person name="Tice H."/>
            <person name="Ticknor L.O."/>
            <person name="Wills P.L."/>
            <person name="Brettin T.S."/>
            <person name="Gilna P."/>
        </authorList>
    </citation>
    <scope>NUCLEOTIDE SEQUENCE [LARGE SCALE GENOMIC DNA]</scope>
    <source>
        <strain>97-27</strain>
    </source>
</reference>
<proteinExistence type="inferred from homology"/>
<dbReference type="EC" id="6.1.1.15" evidence="1"/>
<dbReference type="EMBL" id="AE017355">
    <property type="protein sequence ID" value="AAT63899.1"/>
    <property type="molecule type" value="Genomic_DNA"/>
</dbReference>
<dbReference type="RefSeq" id="WP_000814310.1">
    <property type="nucleotide sequence ID" value="NC_005957.1"/>
</dbReference>
<dbReference type="RefSeq" id="YP_037880.1">
    <property type="nucleotide sequence ID" value="NC_005957.1"/>
</dbReference>
<dbReference type="SMR" id="Q6HEZ6"/>
<dbReference type="KEGG" id="btk:BT9727_3560"/>
<dbReference type="PATRIC" id="fig|281309.8.peg.3798"/>
<dbReference type="HOGENOM" id="CLU_016739_0_0_9"/>
<dbReference type="Proteomes" id="UP000001301">
    <property type="component" value="Chromosome"/>
</dbReference>
<dbReference type="GO" id="GO:0005829">
    <property type="term" value="C:cytosol"/>
    <property type="evidence" value="ECO:0007669"/>
    <property type="project" value="TreeGrafter"/>
</dbReference>
<dbReference type="GO" id="GO:0002161">
    <property type="term" value="F:aminoacyl-tRNA deacylase activity"/>
    <property type="evidence" value="ECO:0007669"/>
    <property type="project" value="InterPro"/>
</dbReference>
<dbReference type="GO" id="GO:0005524">
    <property type="term" value="F:ATP binding"/>
    <property type="evidence" value="ECO:0007669"/>
    <property type="project" value="UniProtKB-UniRule"/>
</dbReference>
<dbReference type="GO" id="GO:0140096">
    <property type="term" value="F:catalytic activity, acting on a protein"/>
    <property type="evidence" value="ECO:0007669"/>
    <property type="project" value="UniProtKB-ARBA"/>
</dbReference>
<dbReference type="GO" id="GO:0004827">
    <property type="term" value="F:proline-tRNA ligase activity"/>
    <property type="evidence" value="ECO:0007669"/>
    <property type="project" value="UniProtKB-UniRule"/>
</dbReference>
<dbReference type="GO" id="GO:0016740">
    <property type="term" value="F:transferase activity"/>
    <property type="evidence" value="ECO:0007669"/>
    <property type="project" value="UniProtKB-ARBA"/>
</dbReference>
<dbReference type="GO" id="GO:0006433">
    <property type="term" value="P:prolyl-tRNA aminoacylation"/>
    <property type="evidence" value="ECO:0007669"/>
    <property type="project" value="UniProtKB-UniRule"/>
</dbReference>
<dbReference type="CDD" id="cd04334">
    <property type="entry name" value="ProRS-INS"/>
    <property type="match status" value="1"/>
</dbReference>
<dbReference type="CDD" id="cd00861">
    <property type="entry name" value="ProRS_anticodon_short"/>
    <property type="match status" value="1"/>
</dbReference>
<dbReference type="CDD" id="cd00779">
    <property type="entry name" value="ProRS_core_prok"/>
    <property type="match status" value="1"/>
</dbReference>
<dbReference type="FunFam" id="3.30.930.10:FF:000043">
    <property type="entry name" value="Proline--tRNA ligase"/>
    <property type="match status" value="1"/>
</dbReference>
<dbReference type="FunFam" id="3.30.930.10:FF:000065">
    <property type="entry name" value="Proline--tRNA ligase"/>
    <property type="match status" value="1"/>
</dbReference>
<dbReference type="FunFam" id="3.40.50.800:FF:000011">
    <property type="entry name" value="Proline--tRNA ligase"/>
    <property type="match status" value="1"/>
</dbReference>
<dbReference type="Gene3D" id="3.40.50.800">
    <property type="entry name" value="Anticodon-binding domain"/>
    <property type="match status" value="1"/>
</dbReference>
<dbReference type="Gene3D" id="3.30.930.10">
    <property type="entry name" value="Bira Bifunctional Protein, Domain 2"/>
    <property type="match status" value="2"/>
</dbReference>
<dbReference type="HAMAP" id="MF_01569">
    <property type="entry name" value="Pro_tRNA_synth_type1"/>
    <property type="match status" value="1"/>
</dbReference>
<dbReference type="InterPro" id="IPR002314">
    <property type="entry name" value="aa-tRNA-synt_IIb"/>
</dbReference>
<dbReference type="InterPro" id="IPR006195">
    <property type="entry name" value="aa-tRNA-synth_II"/>
</dbReference>
<dbReference type="InterPro" id="IPR045864">
    <property type="entry name" value="aa-tRNA-synth_II/BPL/LPL"/>
</dbReference>
<dbReference type="InterPro" id="IPR004154">
    <property type="entry name" value="Anticodon-bd"/>
</dbReference>
<dbReference type="InterPro" id="IPR036621">
    <property type="entry name" value="Anticodon-bd_dom_sf"/>
</dbReference>
<dbReference type="InterPro" id="IPR002316">
    <property type="entry name" value="Pro-tRNA-ligase_IIa"/>
</dbReference>
<dbReference type="InterPro" id="IPR004500">
    <property type="entry name" value="Pro-tRNA-synth_IIa_bac-type"/>
</dbReference>
<dbReference type="InterPro" id="IPR023717">
    <property type="entry name" value="Pro-tRNA-Synthase_IIa_type1"/>
</dbReference>
<dbReference type="InterPro" id="IPR050062">
    <property type="entry name" value="Pro-tRNA_synthetase"/>
</dbReference>
<dbReference type="InterPro" id="IPR044140">
    <property type="entry name" value="ProRS_anticodon_short"/>
</dbReference>
<dbReference type="InterPro" id="IPR033730">
    <property type="entry name" value="ProRS_core_prok"/>
</dbReference>
<dbReference type="InterPro" id="IPR036754">
    <property type="entry name" value="YbaK/aa-tRNA-synt-asso_dom_sf"/>
</dbReference>
<dbReference type="InterPro" id="IPR007214">
    <property type="entry name" value="YbaK/aa-tRNA-synth-assoc-dom"/>
</dbReference>
<dbReference type="NCBIfam" id="NF006625">
    <property type="entry name" value="PRK09194.1"/>
    <property type="match status" value="1"/>
</dbReference>
<dbReference type="NCBIfam" id="TIGR00409">
    <property type="entry name" value="proS_fam_II"/>
    <property type="match status" value="1"/>
</dbReference>
<dbReference type="PANTHER" id="PTHR42753">
    <property type="entry name" value="MITOCHONDRIAL RIBOSOME PROTEIN L39/PROLYL-TRNA LIGASE FAMILY MEMBER"/>
    <property type="match status" value="1"/>
</dbReference>
<dbReference type="PANTHER" id="PTHR42753:SF2">
    <property type="entry name" value="PROLINE--TRNA LIGASE"/>
    <property type="match status" value="1"/>
</dbReference>
<dbReference type="Pfam" id="PF03129">
    <property type="entry name" value="HGTP_anticodon"/>
    <property type="match status" value="1"/>
</dbReference>
<dbReference type="Pfam" id="PF00587">
    <property type="entry name" value="tRNA-synt_2b"/>
    <property type="match status" value="1"/>
</dbReference>
<dbReference type="Pfam" id="PF04073">
    <property type="entry name" value="tRNA_edit"/>
    <property type="match status" value="1"/>
</dbReference>
<dbReference type="PIRSF" id="PIRSF001535">
    <property type="entry name" value="ProRS_1"/>
    <property type="match status" value="1"/>
</dbReference>
<dbReference type="PRINTS" id="PR01046">
    <property type="entry name" value="TRNASYNTHPRO"/>
</dbReference>
<dbReference type="SUPFAM" id="SSF52954">
    <property type="entry name" value="Class II aaRS ABD-related"/>
    <property type="match status" value="1"/>
</dbReference>
<dbReference type="SUPFAM" id="SSF55681">
    <property type="entry name" value="Class II aaRS and biotin synthetases"/>
    <property type="match status" value="1"/>
</dbReference>
<dbReference type="SUPFAM" id="SSF55826">
    <property type="entry name" value="YbaK/ProRS associated domain"/>
    <property type="match status" value="1"/>
</dbReference>
<dbReference type="PROSITE" id="PS50862">
    <property type="entry name" value="AA_TRNA_LIGASE_II"/>
    <property type="match status" value="1"/>
</dbReference>
<name>SYP1_BACHK</name>
<gene>
    <name evidence="1" type="primary">proS1</name>
    <name type="ordered locus">BT9727_3560</name>
</gene>
<feature type="chain" id="PRO_0000248649" description="Proline--tRNA ligase 1">
    <location>
        <begin position="1"/>
        <end position="566"/>
    </location>
</feature>
<protein>
    <recommendedName>
        <fullName evidence="1">Proline--tRNA ligase 1</fullName>
        <ecNumber evidence="1">6.1.1.15</ecNumber>
    </recommendedName>
    <alternativeName>
        <fullName evidence="1">Prolyl-tRNA synthetase 1</fullName>
        <shortName evidence="1">ProRS 1</shortName>
    </alternativeName>
</protein>
<evidence type="ECO:0000255" key="1">
    <source>
        <dbReference type="HAMAP-Rule" id="MF_01569"/>
    </source>
</evidence>